<comment type="function">
    <text evidence="1">Actin-depolymerizing protein. Severs actin filaments (F-actin) and binds to actin monomers (By similarity).</text>
</comment>
<comment type="similarity">
    <text evidence="3">Belongs to the actin-binding proteins ADF family.</text>
</comment>
<comment type="sequence caution" evidence="3">
    <conflict type="erroneous gene model prediction">
        <sequence resource="EMBL-CDS" id="BAF16370"/>
    </conflict>
</comment>
<organism>
    <name type="scientific">Oryza sativa subsp. japonica</name>
    <name type="common">Rice</name>
    <dbReference type="NCBI Taxonomy" id="39947"/>
    <lineage>
        <taxon>Eukaryota</taxon>
        <taxon>Viridiplantae</taxon>
        <taxon>Streptophyta</taxon>
        <taxon>Embryophyta</taxon>
        <taxon>Tracheophyta</taxon>
        <taxon>Spermatophyta</taxon>
        <taxon>Magnoliopsida</taxon>
        <taxon>Liliopsida</taxon>
        <taxon>Poales</taxon>
        <taxon>Poaceae</taxon>
        <taxon>BOP clade</taxon>
        <taxon>Oryzoideae</taxon>
        <taxon>Oryzeae</taxon>
        <taxon>Oryzinae</taxon>
        <taxon>Oryza</taxon>
        <taxon>Oryza sativa</taxon>
    </lineage>
</organism>
<name>ADF7_ORYSJ</name>
<feature type="chain" id="PRO_0000278110" description="Actin-depolymerizing factor 7">
    <location>
        <begin position="1"/>
        <end position="139"/>
    </location>
</feature>
<feature type="domain" description="ADF-H" evidence="2">
    <location>
        <begin position="7"/>
        <end position="139"/>
    </location>
</feature>
<gene>
    <name type="primary">ADF7</name>
    <name type="ordered locus">Os05g0113400</name>
    <name type="ordered locus">LOC_Os05g02250</name>
</gene>
<protein>
    <recommendedName>
        <fullName>Actin-depolymerizing factor 7</fullName>
        <shortName>ADF-7</shortName>
        <shortName>OsADF7</shortName>
    </recommendedName>
</protein>
<accession>Q0DLA3</accession>
<reference key="1">
    <citation type="journal article" date="2005" name="Nature">
        <title>The map-based sequence of the rice genome.</title>
        <authorList>
            <consortium name="International rice genome sequencing project (IRGSP)"/>
        </authorList>
    </citation>
    <scope>NUCLEOTIDE SEQUENCE [LARGE SCALE GENOMIC DNA]</scope>
    <source>
        <strain>cv. Nipponbare</strain>
    </source>
</reference>
<reference key="2">
    <citation type="journal article" date="2008" name="Nucleic Acids Res.">
        <title>The rice annotation project database (RAP-DB): 2008 update.</title>
        <authorList>
            <consortium name="The rice annotation project (RAP)"/>
        </authorList>
    </citation>
    <scope>GENOME REANNOTATION</scope>
    <source>
        <strain>cv. Nipponbare</strain>
    </source>
</reference>
<reference key="3">
    <citation type="journal article" date="2013" name="Rice">
        <title>Improvement of the Oryza sativa Nipponbare reference genome using next generation sequence and optical map data.</title>
        <authorList>
            <person name="Kawahara Y."/>
            <person name="de la Bastide M."/>
            <person name="Hamilton J.P."/>
            <person name="Kanamori H."/>
            <person name="McCombie W.R."/>
            <person name="Ouyang S."/>
            <person name="Schwartz D.C."/>
            <person name="Tanaka T."/>
            <person name="Wu J."/>
            <person name="Zhou S."/>
            <person name="Childs K.L."/>
            <person name="Davidson R.M."/>
            <person name="Lin H."/>
            <person name="Quesada-Ocampo L."/>
            <person name="Vaillancourt B."/>
            <person name="Sakai H."/>
            <person name="Lee S.S."/>
            <person name="Kim J."/>
            <person name="Numa H."/>
            <person name="Itoh T."/>
            <person name="Buell C.R."/>
            <person name="Matsumoto T."/>
        </authorList>
    </citation>
    <scope>GENOME REANNOTATION</scope>
    <source>
        <strain>cv. Nipponbare</strain>
    </source>
</reference>
<reference key="4">
    <citation type="journal article" date="2006" name="J. Plant Physiol.">
        <title>Comparative study of rice and Arabidopsis actin-depolymerizing factors gene families.</title>
        <authorList>
            <person name="Feng Y."/>
            <person name="Liu Q."/>
            <person name="Xue Q."/>
        </authorList>
    </citation>
    <scope>GENE FAMILY</scope>
</reference>
<proteinExistence type="inferred from homology"/>
<evidence type="ECO:0000250" key="1"/>
<evidence type="ECO:0000255" key="2">
    <source>
        <dbReference type="PROSITE-ProRule" id="PRU00599"/>
    </source>
</evidence>
<evidence type="ECO:0000305" key="3"/>
<keyword id="KW-0009">Actin-binding</keyword>
<keyword id="KW-1185">Reference proteome</keyword>
<sequence>MANAASGMAVDDECKLKFLELKAKRTYRFIIYKIDEKKKMVVVEKVGEPVLNYDDFAASLPANECRYAIFDYDFVTEENCQKSKIFFIAWSPDTSRVRSKMIYASSKDRFKRELDGIQVELQATDPTEVGLDVIRGRAN</sequence>
<dbReference type="EMBL" id="AP008211">
    <property type="protein sequence ID" value="BAF16370.1"/>
    <property type="status" value="ALT_SEQ"/>
    <property type="molecule type" value="Genomic_DNA"/>
</dbReference>
<dbReference type="EMBL" id="AP014961">
    <property type="status" value="NOT_ANNOTATED_CDS"/>
    <property type="molecule type" value="Genomic_DNA"/>
</dbReference>
<dbReference type="RefSeq" id="XP_015639583.1">
    <property type="nucleotide sequence ID" value="XM_015784097.1"/>
</dbReference>
<dbReference type="SMR" id="Q0DLA3"/>
<dbReference type="FunCoup" id="Q0DLA3">
    <property type="interactions" value="2763"/>
</dbReference>
<dbReference type="STRING" id="39947.Q0DLA3"/>
<dbReference type="PaxDb" id="39947-Q0DLA3"/>
<dbReference type="KEGG" id="dosa:Os05g0113400"/>
<dbReference type="eggNOG" id="KOG1735">
    <property type="taxonomic scope" value="Eukaryota"/>
</dbReference>
<dbReference type="HOGENOM" id="CLU_094004_2_2_1"/>
<dbReference type="InParanoid" id="Q0DLA3"/>
<dbReference type="OrthoDB" id="10249245at2759"/>
<dbReference type="Proteomes" id="UP000000763">
    <property type="component" value="Chromosome 5"/>
</dbReference>
<dbReference type="Proteomes" id="UP000059680">
    <property type="component" value="Chromosome 5"/>
</dbReference>
<dbReference type="GO" id="GO:0015629">
    <property type="term" value="C:actin cytoskeleton"/>
    <property type="evidence" value="ECO:0000318"/>
    <property type="project" value="GO_Central"/>
</dbReference>
<dbReference type="GO" id="GO:0005737">
    <property type="term" value="C:cytoplasm"/>
    <property type="evidence" value="ECO:0000318"/>
    <property type="project" value="GO_Central"/>
</dbReference>
<dbReference type="GO" id="GO:0051015">
    <property type="term" value="F:actin filament binding"/>
    <property type="evidence" value="ECO:0000318"/>
    <property type="project" value="GO_Central"/>
</dbReference>
<dbReference type="GO" id="GO:0030042">
    <property type="term" value="P:actin filament depolymerization"/>
    <property type="evidence" value="ECO:0000318"/>
    <property type="project" value="GO_Central"/>
</dbReference>
<dbReference type="CDD" id="cd11286">
    <property type="entry name" value="ADF_cofilin_like"/>
    <property type="match status" value="1"/>
</dbReference>
<dbReference type="FunFam" id="3.40.20.10:FF:000025">
    <property type="entry name" value="Actin-depolymerizing factor 2"/>
    <property type="match status" value="1"/>
</dbReference>
<dbReference type="Gene3D" id="3.40.20.10">
    <property type="entry name" value="Severin"/>
    <property type="match status" value="1"/>
</dbReference>
<dbReference type="InterPro" id="IPR002108">
    <property type="entry name" value="ADF-H"/>
</dbReference>
<dbReference type="InterPro" id="IPR029006">
    <property type="entry name" value="ADF-H/Gelsolin-like_dom_sf"/>
</dbReference>
<dbReference type="InterPro" id="IPR017904">
    <property type="entry name" value="ADF/Cofilin"/>
</dbReference>
<dbReference type="PANTHER" id="PTHR11913">
    <property type="entry name" value="COFILIN-RELATED"/>
    <property type="match status" value="1"/>
</dbReference>
<dbReference type="Pfam" id="PF00241">
    <property type="entry name" value="Cofilin_ADF"/>
    <property type="match status" value="1"/>
</dbReference>
<dbReference type="SMART" id="SM00102">
    <property type="entry name" value="ADF"/>
    <property type="match status" value="1"/>
</dbReference>
<dbReference type="SUPFAM" id="SSF55753">
    <property type="entry name" value="Actin depolymerizing proteins"/>
    <property type="match status" value="1"/>
</dbReference>
<dbReference type="PROSITE" id="PS51263">
    <property type="entry name" value="ADF_H"/>
    <property type="match status" value="1"/>
</dbReference>